<comment type="function">
    <text evidence="1">Extracellular dipeptidyl-peptidase which removes N-terminal dipeptides sequentially from polypeptides having unsubstituted N-termini.</text>
</comment>
<comment type="subcellular location">
    <subcellularLocation>
        <location evidence="1">Secreted</location>
    </subcellularLocation>
</comment>
<comment type="similarity">
    <text evidence="3">Belongs to the peptidase S9C family.</text>
</comment>
<comment type="sequence caution" evidence="3">
    <conflict type="erroneous initiation">
        <sequence resource="EMBL-CDS" id="EED52896"/>
    </conflict>
    <text>Extended N-terminus.</text>
</comment>
<reference key="1">
    <citation type="journal article" date="2015" name="Genome Announc.">
        <title>Genome sequence of Aspergillus flavus NRRL 3357, a strain that causes aflatoxin contamination of food and feed.</title>
        <authorList>
            <person name="Nierman W.C."/>
            <person name="Yu J."/>
            <person name="Fedorova-Abrams N.D."/>
            <person name="Losada L."/>
            <person name="Cleveland T.E."/>
            <person name="Bhatnagar D."/>
            <person name="Bennett J.W."/>
            <person name="Dean R."/>
            <person name="Payne G.A."/>
        </authorList>
    </citation>
    <scope>NUCLEOTIDE SEQUENCE [LARGE SCALE GENOMIC DNA]</scope>
    <source>
        <strain>ATCC 200026 / FGSC A1120 / IAM 13836 / NRRL 3357 / JCM 12722 / SRRC 167</strain>
    </source>
</reference>
<sequence>MGALRWLSIAATASTALALNPEGLISAPRRSEAIPNPSGDVAVFSQSQYSFKTHKTTSQWNVLDLKSGDIKLLTNDSDVSEIVWLGSDDSTVLYVNGTNADIPGGVELWVSDISDFANGYKAASLPASFSGFKVVTTDSGDVRYVAYAESWANGTAYNEELVAKPLSSARIYDSIYVRHWDYYLTTRFNAVFSGTLKKSEGKGKATYKADGDLKNLVSPVKNAESPYPPFGGASDYDLSPDGKWVAFKSKAHDIPRANYTTAYIFLVPHDGSKTAVPINGPDSPGTPEGVKGDAGSPVFSPDSKKIAYWQMADESYEADHRTLYVYTVGSEETIPSLAADWDRSLDSVKWADDDNLIIGVEDAGRSRLFSIPADAGDDYKPKNFTDGGVVSAYYQLPDSTYLVTSTAIWTSWNVYIASPEKGVIKTLATANKIDPELKGLGPEIVDEFYYEGNWTKIQAFVIYPENFDKSKSYPLLYYIHGGPQSSWLDSWSTRWNPKVFADQGYVVVAPNPTGSSGFGDALQDAIQNQWGGYPYEDLVKGWEYVNENFDFIDTDNGVAAGASYGGFMINWIQGSDLGRKFKALVSHDGTFVADAKVSTEELWFMQHEFNGTFWDNRENYRRWDPSAPERILKFSTPMLIIHSDLDYRLPVSEGLSLFNILQERGVPSRFLNFPDENHWVQNKENSLVWHQQVLGWLNKYSGVEESNEDAVSLDDTVIPVVDYNP</sequence>
<evidence type="ECO:0000250" key="1"/>
<evidence type="ECO:0000255" key="2"/>
<evidence type="ECO:0000305" key="3"/>
<protein>
    <recommendedName>
        <fullName>Probable dipeptidyl-peptidase 5</fullName>
        <ecNumber>3.4.14.-</ecNumber>
    </recommendedName>
    <alternativeName>
        <fullName>Dipeptidyl-peptidase V</fullName>
        <shortName>DPP V</shortName>
        <shortName>DppV</shortName>
    </alternativeName>
</protein>
<organism>
    <name type="scientific">Aspergillus flavus (strain ATCC 200026 / FGSC A1120 / IAM 13836 / NRRL 3357 / JCM 12722 / SRRC 167)</name>
    <dbReference type="NCBI Taxonomy" id="332952"/>
    <lineage>
        <taxon>Eukaryota</taxon>
        <taxon>Fungi</taxon>
        <taxon>Dikarya</taxon>
        <taxon>Ascomycota</taxon>
        <taxon>Pezizomycotina</taxon>
        <taxon>Eurotiomycetes</taxon>
        <taxon>Eurotiomycetidae</taxon>
        <taxon>Eurotiales</taxon>
        <taxon>Aspergillaceae</taxon>
        <taxon>Aspergillus</taxon>
        <taxon>Aspergillus subgen. Circumdati</taxon>
    </lineage>
</organism>
<keyword id="KW-0031">Aminopeptidase</keyword>
<keyword id="KW-0325">Glycoprotein</keyword>
<keyword id="KW-0378">Hydrolase</keyword>
<keyword id="KW-0645">Protease</keyword>
<keyword id="KW-0964">Secreted</keyword>
<keyword id="KW-0720">Serine protease</keyword>
<keyword id="KW-0732">Signal</keyword>
<proteinExistence type="inferred from homology"/>
<gene>
    <name type="primary">dpp5</name>
    <name type="ORF">AFLA_045980</name>
</gene>
<accession>B8NBM3</accession>
<name>DPP5_ASPFN</name>
<feature type="signal peptide" evidence="2">
    <location>
        <begin position="1"/>
        <end position="18"/>
    </location>
</feature>
<feature type="chain" id="PRO_0000397818" description="Probable dipeptidyl-peptidase 5">
    <location>
        <begin position="19"/>
        <end position="725"/>
    </location>
</feature>
<feature type="active site" description="Charge relay system" evidence="1">
    <location>
        <position position="563"/>
    </location>
</feature>
<feature type="active site" description="Charge relay system" evidence="1">
    <location>
        <position position="646"/>
    </location>
</feature>
<feature type="active site" description="Charge relay system" evidence="1">
    <location>
        <position position="678"/>
    </location>
</feature>
<feature type="glycosylation site" description="N-linked (GlcNAc...) asparagine" evidence="2">
    <location>
        <position position="75"/>
    </location>
</feature>
<feature type="glycosylation site" description="N-linked (GlcNAc...) asparagine" evidence="2">
    <location>
        <position position="96"/>
    </location>
</feature>
<feature type="glycosylation site" description="N-linked (GlcNAc...) asparagine" evidence="2">
    <location>
        <position position="153"/>
    </location>
</feature>
<feature type="glycosylation site" description="N-linked (GlcNAc...) asparagine" evidence="2">
    <location>
        <position position="258"/>
    </location>
</feature>
<feature type="glycosylation site" description="N-linked (GlcNAc...) asparagine" evidence="2">
    <location>
        <position position="383"/>
    </location>
</feature>
<feature type="glycosylation site" description="N-linked (GlcNAc...) asparagine" evidence="2">
    <location>
        <position position="453"/>
    </location>
</feature>
<feature type="glycosylation site" description="N-linked (GlcNAc...) asparagine" evidence="2">
    <location>
        <position position="610"/>
    </location>
</feature>
<dbReference type="EC" id="3.4.14.-"/>
<dbReference type="EMBL" id="EQ963476">
    <property type="protein sequence ID" value="EED52896.1"/>
    <property type="status" value="ALT_INIT"/>
    <property type="molecule type" value="Genomic_DNA"/>
</dbReference>
<dbReference type="RefSeq" id="XP_002378060.1">
    <property type="nucleotide sequence ID" value="XM_002378019.1"/>
</dbReference>
<dbReference type="SMR" id="B8NBM3"/>
<dbReference type="STRING" id="332952.B8NBM3"/>
<dbReference type="ESTHER" id="aspor-Q9Y8E3">
    <property type="family name" value="Prolyl_oligopeptidase_S9"/>
</dbReference>
<dbReference type="MEROPS" id="S09.012"/>
<dbReference type="GlyCosmos" id="B8NBM3">
    <property type="glycosylation" value="7 sites, No reported glycans"/>
</dbReference>
<dbReference type="EnsemblFungi" id="EED52896">
    <property type="protein sequence ID" value="EED52896"/>
    <property type="gene ID" value="AFLA_045980"/>
</dbReference>
<dbReference type="VEuPathDB" id="FungiDB:AFLA_008188"/>
<dbReference type="eggNOG" id="KOG2100">
    <property type="taxonomic scope" value="Eukaryota"/>
</dbReference>
<dbReference type="GO" id="GO:0005576">
    <property type="term" value="C:extracellular region"/>
    <property type="evidence" value="ECO:0007669"/>
    <property type="project" value="UniProtKB-SubCell"/>
</dbReference>
<dbReference type="GO" id="GO:0004177">
    <property type="term" value="F:aminopeptidase activity"/>
    <property type="evidence" value="ECO:0007669"/>
    <property type="project" value="UniProtKB-KW"/>
</dbReference>
<dbReference type="GO" id="GO:0004252">
    <property type="term" value="F:serine-type endopeptidase activity"/>
    <property type="evidence" value="ECO:0007669"/>
    <property type="project" value="TreeGrafter"/>
</dbReference>
<dbReference type="GO" id="GO:0006508">
    <property type="term" value="P:proteolysis"/>
    <property type="evidence" value="ECO:0007669"/>
    <property type="project" value="UniProtKB-KW"/>
</dbReference>
<dbReference type="FunFam" id="2.120.10.30:FF:000109">
    <property type="entry name" value="Dipeptidyl-peptidase 5"/>
    <property type="match status" value="1"/>
</dbReference>
<dbReference type="FunFam" id="3.40.50.1820:FF:000028">
    <property type="entry name" value="S9 family peptidase"/>
    <property type="match status" value="1"/>
</dbReference>
<dbReference type="Gene3D" id="3.40.50.1820">
    <property type="entry name" value="alpha/beta hydrolase"/>
    <property type="match status" value="1"/>
</dbReference>
<dbReference type="Gene3D" id="2.120.10.30">
    <property type="entry name" value="TolB, C-terminal domain"/>
    <property type="match status" value="1"/>
</dbReference>
<dbReference type="InterPro" id="IPR011042">
    <property type="entry name" value="6-blade_b-propeller_TolB-like"/>
</dbReference>
<dbReference type="InterPro" id="IPR029058">
    <property type="entry name" value="AB_hydrolase_fold"/>
</dbReference>
<dbReference type="InterPro" id="IPR011659">
    <property type="entry name" value="PD40"/>
</dbReference>
<dbReference type="InterPro" id="IPR001375">
    <property type="entry name" value="Peptidase_S9_cat"/>
</dbReference>
<dbReference type="PANTHER" id="PTHR42776:SF11">
    <property type="entry name" value="DIPEPTIDYL-PEPTIDASE 5-RELATED"/>
    <property type="match status" value="1"/>
</dbReference>
<dbReference type="PANTHER" id="PTHR42776">
    <property type="entry name" value="SERINE PEPTIDASE S9 FAMILY MEMBER"/>
    <property type="match status" value="1"/>
</dbReference>
<dbReference type="Pfam" id="PF07676">
    <property type="entry name" value="PD40"/>
    <property type="match status" value="1"/>
</dbReference>
<dbReference type="Pfam" id="PF00326">
    <property type="entry name" value="Peptidase_S9"/>
    <property type="match status" value="1"/>
</dbReference>
<dbReference type="SUPFAM" id="SSF53474">
    <property type="entry name" value="alpha/beta-Hydrolases"/>
    <property type="match status" value="1"/>
</dbReference>
<dbReference type="SUPFAM" id="SSF82171">
    <property type="entry name" value="DPP6 N-terminal domain-like"/>
    <property type="match status" value="1"/>
</dbReference>